<feature type="chain" id="PRO_0000093133" description="Zinc import ATP-binding protein ZnuC">
    <location>
        <begin position="1"/>
        <end position="268"/>
    </location>
</feature>
<feature type="domain" description="ABC transporter" evidence="1">
    <location>
        <begin position="16"/>
        <end position="231"/>
    </location>
</feature>
<feature type="binding site" evidence="1">
    <location>
        <begin position="48"/>
        <end position="55"/>
    </location>
    <ligand>
        <name>ATP</name>
        <dbReference type="ChEBI" id="CHEBI:30616"/>
    </ligand>
</feature>
<name>ZNUC_HAEIN</name>
<protein>
    <recommendedName>
        <fullName evidence="1">Zinc import ATP-binding protein ZnuC</fullName>
        <ecNumber evidence="1">7.2.2.20</ecNumber>
    </recommendedName>
</protein>
<evidence type="ECO:0000255" key="1">
    <source>
        <dbReference type="HAMAP-Rule" id="MF_01725"/>
    </source>
</evidence>
<accession>P44692</accession>
<comment type="function">
    <text evidence="1">Part of the ABC transporter complex ZnuABC involved in zinc import. Responsible for energy coupling to the transport system.</text>
</comment>
<comment type="catalytic activity">
    <reaction evidence="1">
        <text>Zn(2+)(out) + ATP(in) + H2O(in) = Zn(2+)(in) + ADP(in) + phosphate(in) + H(+)(in)</text>
        <dbReference type="Rhea" id="RHEA:29795"/>
        <dbReference type="ChEBI" id="CHEBI:15377"/>
        <dbReference type="ChEBI" id="CHEBI:15378"/>
        <dbReference type="ChEBI" id="CHEBI:29105"/>
        <dbReference type="ChEBI" id="CHEBI:30616"/>
        <dbReference type="ChEBI" id="CHEBI:43474"/>
        <dbReference type="ChEBI" id="CHEBI:456216"/>
        <dbReference type="EC" id="7.2.2.20"/>
    </reaction>
</comment>
<comment type="subunit">
    <text evidence="1">The complex is composed of two ATP-binding proteins (ZnuC), two transmembrane proteins (ZnuB) and a solute-binding protein (ZnuA).</text>
</comment>
<comment type="subcellular location">
    <subcellularLocation>
        <location evidence="1">Cell inner membrane</location>
        <topology evidence="1">Peripheral membrane protein</topology>
    </subcellularLocation>
</comment>
<comment type="similarity">
    <text evidence="1">Belongs to the ABC transporter superfamily. Zinc importer (TC 3.A.1.15.5) family.</text>
</comment>
<gene>
    <name evidence="1" type="primary">znuC</name>
    <name type="ordered locus">HI_0408</name>
</gene>
<sequence>MNITAIRNEQNQQPLIQLKNINVVFAQKTALQDINLNIYPNSIITIVGPNGGGKSTLLKTLLKLQTPTSGEVIYSKNVRIGYVPQKIHLDHSLPITVERFLSLKKGIKTQEISTALEQLSISHLRKNNMQKLSGGEMQRVLLARAILNKPNLLVLDEPTQGVDITGQAELYQLIHQTQQKLNCAVLMVSHDLHIVMADSKEVLCINQHICCAGTPDVLSNDPTFMRLWGNQIAQNVGFYTHHHNHHHTLHGDVCGCNSSAVHCQNKDK</sequence>
<reference key="1">
    <citation type="journal article" date="1995" name="Science">
        <title>Whole-genome random sequencing and assembly of Haemophilus influenzae Rd.</title>
        <authorList>
            <person name="Fleischmann R.D."/>
            <person name="Adams M.D."/>
            <person name="White O."/>
            <person name="Clayton R.A."/>
            <person name="Kirkness E.F."/>
            <person name="Kerlavage A.R."/>
            <person name="Bult C.J."/>
            <person name="Tomb J.-F."/>
            <person name="Dougherty B.A."/>
            <person name="Merrick J.M."/>
            <person name="McKenney K."/>
            <person name="Sutton G.G."/>
            <person name="FitzHugh W."/>
            <person name="Fields C.A."/>
            <person name="Gocayne J.D."/>
            <person name="Scott J.D."/>
            <person name="Shirley R."/>
            <person name="Liu L.-I."/>
            <person name="Glodek A."/>
            <person name="Kelley J.M."/>
            <person name="Weidman J.F."/>
            <person name="Phillips C.A."/>
            <person name="Spriggs T."/>
            <person name="Hedblom E."/>
            <person name="Cotton M.D."/>
            <person name="Utterback T.R."/>
            <person name="Hanna M.C."/>
            <person name="Nguyen D.T."/>
            <person name="Saudek D.M."/>
            <person name="Brandon R.C."/>
            <person name="Fine L.D."/>
            <person name="Fritchman J.L."/>
            <person name="Fuhrmann J.L."/>
            <person name="Geoghagen N.S.M."/>
            <person name="Gnehm C.L."/>
            <person name="McDonald L.A."/>
            <person name="Small K.V."/>
            <person name="Fraser C.M."/>
            <person name="Smith H.O."/>
            <person name="Venter J.C."/>
        </authorList>
    </citation>
    <scope>NUCLEOTIDE SEQUENCE [LARGE SCALE GENOMIC DNA]</scope>
    <source>
        <strain>ATCC 51907 / DSM 11121 / KW20 / Rd</strain>
    </source>
</reference>
<keyword id="KW-0067">ATP-binding</keyword>
<keyword id="KW-0997">Cell inner membrane</keyword>
<keyword id="KW-1003">Cell membrane</keyword>
<keyword id="KW-0406">Ion transport</keyword>
<keyword id="KW-0472">Membrane</keyword>
<keyword id="KW-0547">Nucleotide-binding</keyword>
<keyword id="KW-1185">Reference proteome</keyword>
<keyword id="KW-1278">Translocase</keyword>
<keyword id="KW-0813">Transport</keyword>
<keyword id="KW-0862">Zinc</keyword>
<keyword id="KW-0864">Zinc transport</keyword>
<dbReference type="EC" id="7.2.2.20" evidence="1"/>
<dbReference type="EMBL" id="L42023">
    <property type="protein sequence ID" value="AAC22067.1"/>
    <property type="molecule type" value="Genomic_DNA"/>
</dbReference>
<dbReference type="PIR" id="B64066">
    <property type="entry name" value="B64066"/>
</dbReference>
<dbReference type="RefSeq" id="NP_438570.1">
    <property type="nucleotide sequence ID" value="NC_000907.1"/>
</dbReference>
<dbReference type="SMR" id="P44692"/>
<dbReference type="STRING" id="71421.HI_0408"/>
<dbReference type="EnsemblBacteria" id="AAC22067">
    <property type="protein sequence ID" value="AAC22067"/>
    <property type="gene ID" value="HI_0408"/>
</dbReference>
<dbReference type="KEGG" id="hin:HI_0408"/>
<dbReference type="PATRIC" id="fig|71421.8.peg.427"/>
<dbReference type="eggNOG" id="COG1121">
    <property type="taxonomic scope" value="Bacteria"/>
</dbReference>
<dbReference type="HOGENOM" id="CLU_000604_1_11_6"/>
<dbReference type="OrthoDB" id="9780942at2"/>
<dbReference type="PhylomeDB" id="P44692"/>
<dbReference type="BioCyc" id="HINF71421:G1GJ1-423-MONOMER"/>
<dbReference type="Proteomes" id="UP000000579">
    <property type="component" value="Chromosome"/>
</dbReference>
<dbReference type="GO" id="GO:0043190">
    <property type="term" value="C:ATP-binding cassette (ABC) transporter complex"/>
    <property type="evidence" value="ECO:0000318"/>
    <property type="project" value="GO_Central"/>
</dbReference>
<dbReference type="GO" id="GO:0015633">
    <property type="term" value="F:ABC-type zinc transporter activity"/>
    <property type="evidence" value="ECO:0007669"/>
    <property type="project" value="UniProtKB-EC"/>
</dbReference>
<dbReference type="GO" id="GO:0005524">
    <property type="term" value="F:ATP binding"/>
    <property type="evidence" value="ECO:0007669"/>
    <property type="project" value="UniProtKB-KW"/>
</dbReference>
<dbReference type="GO" id="GO:0016887">
    <property type="term" value="F:ATP hydrolysis activity"/>
    <property type="evidence" value="ECO:0007669"/>
    <property type="project" value="InterPro"/>
</dbReference>
<dbReference type="GO" id="GO:0042626">
    <property type="term" value="F:ATPase-coupled transmembrane transporter activity"/>
    <property type="evidence" value="ECO:0000318"/>
    <property type="project" value="GO_Central"/>
</dbReference>
<dbReference type="GO" id="GO:0010043">
    <property type="term" value="P:response to zinc ion"/>
    <property type="evidence" value="ECO:0000318"/>
    <property type="project" value="GO_Central"/>
</dbReference>
<dbReference type="FunFam" id="3.40.50.300:FF:000392">
    <property type="entry name" value="Zinc import ATP-binding protein ZnuC"/>
    <property type="match status" value="1"/>
</dbReference>
<dbReference type="Gene3D" id="3.40.50.300">
    <property type="entry name" value="P-loop containing nucleotide triphosphate hydrolases"/>
    <property type="match status" value="1"/>
</dbReference>
<dbReference type="InterPro" id="IPR003593">
    <property type="entry name" value="AAA+_ATPase"/>
</dbReference>
<dbReference type="InterPro" id="IPR003439">
    <property type="entry name" value="ABC_transporter-like_ATP-bd"/>
</dbReference>
<dbReference type="InterPro" id="IPR017871">
    <property type="entry name" value="ABC_transporter-like_CS"/>
</dbReference>
<dbReference type="InterPro" id="IPR050153">
    <property type="entry name" value="Metal_Ion_Import_ABC"/>
</dbReference>
<dbReference type="InterPro" id="IPR027417">
    <property type="entry name" value="P-loop_NTPase"/>
</dbReference>
<dbReference type="NCBIfam" id="NF007090">
    <property type="entry name" value="PRK09544.1"/>
    <property type="match status" value="1"/>
</dbReference>
<dbReference type="PANTHER" id="PTHR42734">
    <property type="entry name" value="METAL TRANSPORT SYSTEM ATP-BINDING PROTEIN TM_0124-RELATED"/>
    <property type="match status" value="1"/>
</dbReference>
<dbReference type="PANTHER" id="PTHR42734:SF9">
    <property type="entry name" value="ZINC IMPORT ATP-BINDING PROTEIN ZNUC"/>
    <property type="match status" value="1"/>
</dbReference>
<dbReference type="Pfam" id="PF00005">
    <property type="entry name" value="ABC_tran"/>
    <property type="match status" value="1"/>
</dbReference>
<dbReference type="SMART" id="SM00382">
    <property type="entry name" value="AAA"/>
    <property type="match status" value="1"/>
</dbReference>
<dbReference type="SUPFAM" id="SSF52540">
    <property type="entry name" value="P-loop containing nucleoside triphosphate hydrolases"/>
    <property type="match status" value="1"/>
</dbReference>
<dbReference type="PROSITE" id="PS00211">
    <property type="entry name" value="ABC_TRANSPORTER_1"/>
    <property type="match status" value="1"/>
</dbReference>
<dbReference type="PROSITE" id="PS50893">
    <property type="entry name" value="ABC_TRANSPORTER_2"/>
    <property type="match status" value="1"/>
</dbReference>
<dbReference type="PROSITE" id="PS51298">
    <property type="entry name" value="ZNUC"/>
    <property type="match status" value="1"/>
</dbReference>
<proteinExistence type="inferred from homology"/>
<organism>
    <name type="scientific">Haemophilus influenzae (strain ATCC 51907 / DSM 11121 / KW20 / Rd)</name>
    <dbReference type="NCBI Taxonomy" id="71421"/>
    <lineage>
        <taxon>Bacteria</taxon>
        <taxon>Pseudomonadati</taxon>
        <taxon>Pseudomonadota</taxon>
        <taxon>Gammaproteobacteria</taxon>
        <taxon>Pasteurellales</taxon>
        <taxon>Pasteurellaceae</taxon>
        <taxon>Haemophilus</taxon>
    </lineage>
</organism>